<sequence>MMKLGLYLTLLFLSVWTVSGEPFKCTNICGKGAIIIAGVAYCCPQGYKPMIRRKMEDAFMATDCDCLFMMPAGQGMYAQYPQAPNQGSFIVQQPPQAPAVAVAPAAATVQVVAPAPTVVAAPPAAPPPPPPVVKVAPPAPRLPTYKPMYQMIRQQPMRQQRTWYHRPAPTYAAPTKSTKPKHEFFKFLDDFLSKQGYRGGNRG</sequence>
<reference evidence="4" key="1">
    <citation type="submission" date="2007-12" db="EMBL/GenBank/DDBJ databases">
        <title>DOE Joint Genome Institute Lottia gigantea EST project.</title>
        <authorList>
            <person name="Richardson P."/>
            <person name="Lucas S."/>
            <person name="Rokhsar D."/>
            <person name="Wang M."/>
            <person name="Lindquist E.A."/>
        </authorList>
    </citation>
    <scope>NUCLEOTIDE SEQUENCE [LARGE SCALE MRNA]</scope>
    <scope>IDENTIFICATION</scope>
    <source>
        <tissue evidence="3">Foot</tissue>
    </source>
</reference>
<reference key="2">
    <citation type="journal article" date="2013" name="FEBS J.">
        <title>The shell-forming proteome of Lottia gigantea reveals both deep conservations and lineage-specific novelties.</title>
        <authorList>
            <person name="Marie B."/>
            <person name="Jackson D.J."/>
            <person name="Ramos-Silva P."/>
            <person name="Zanella-Cleon I."/>
            <person name="Guichard N."/>
            <person name="Marin F."/>
        </authorList>
    </citation>
    <scope>PROTEIN SEQUENCE OF 25-53; 135-153 AND 162-202</scope>
    <scope>SUBCELLULAR LOCATION</scope>
    <scope>TISSUE SPECIFICITY</scope>
    <source>
        <tissue>Mantle</tissue>
    </source>
</reference>
<protein>
    <recommendedName>
        <fullName>Proline-rich protein 1</fullName>
    </recommendedName>
    <alternativeName>
        <fullName>Uncharacterized shell protein 6</fullName>
        <shortName>LUSP-6</shortName>
    </alternativeName>
</protein>
<comment type="subcellular location">
    <subcellularLocation>
        <location evidence="2">Secreted</location>
    </subcellularLocation>
</comment>
<comment type="tissue specificity">
    <text evidence="2">Component of the acid-insoluble and acid-soluble organic matrix of calcified layers of the shell (at protein level).</text>
</comment>
<name>PRP1_LOTGI</name>
<evidence type="ECO:0000255" key="1"/>
<evidence type="ECO:0000269" key="2">
    <source>
    </source>
</evidence>
<evidence type="ECO:0000269" key="3">
    <source ref="1"/>
</evidence>
<evidence type="ECO:0000305" key="4"/>
<proteinExistence type="evidence at protein level"/>
<feature type="signal peptide" evidence="1">
    <location>
        <begin position="1"/>
        <end position="20"/>
    </location>
</feature>
<feature type="chain" id="PRO_0000415239" description="Proline-rich protein 1" evidence="1">
    <location>
        <begin position="21"/>
        <end position="203"/>
    </location>
</feature>
<keyword id="KW-0903">Direct protein sequencing</keyword>
<keyword id="KW-0964">Secreted</keyword>
<keyword id="KW-0732">Signal</keyword>
<organism>
    <name type="scientific">Lottia gigantea</name>
    <name type="common">Giant owl limpet</name>
    <dbReference type="NCBI Taxonomy" id="225164"/>
    <lineage>
        <taxon>Eukaryota</taxon>
        <taxon>Metazoa</taxon>
        <taxon>Spiralia</taxon>
        <taxon>Lophotrochozoa</taxon>
        <taxon>Mollusca</taxon>
        <taxon>Gastropoda</taxon>
        <taxon>Patellogastropoda</taxon>
        <taxon>Lottioidea</taxon>
        <taxon>Lottiidae</taxon>
        <taxon>Lottia</taxon>
    </lineage>
</organism>
<accession>B3A0Q1</accession>
<dbReference type="EMBL" id="FC632094">
    <property type="status" value="NOT_ANNOTATED_CDS"/>
    <property type="molecule type" value="mRNA"/>
</dbReference>
<dbReference type="GO" id="GO:0005576">
    <property type="term" value="C:extracellular region"/>
    <property type="evidence" value="ECO:0007669"/>
    <property type="project" value="UniProtKB-SubCell"/>
</dbReference>